<protein>
    <recommendedName>
        <fullName evidence="1">Tyrosine--tRNA ligase</fullName>
        <ecNumber evidence="1">6.1.1.1</ecNumber>
    </recommendedName>
    <alternativeName>
        <fullName evidence="1">Tyrosyl-tRNA synthetase</fullName>
        <shortName evidence="1">TyrRS</shortName>
    </alternativeName>
</protein>
<comment type="function">
    <text evidence="1">Catalyzes the attachment of tyrosine to tRNA(Tyr) in a two-step reaction: tyrosine is first activated by ATP to form Tyr-AMP and then transferred to the acceptor end of tRNA(Tyr).</text>
</comment>
<comment type="catalytic activity">
    <reaction evidence="1">
        <text>tRNA(Tyr) + L-tyrosine + ATP = L-tyrosyl-tRNA(Tyr) + AMP + diphosphate + H(+)</text>
        <dbReference type="Rhea" id="RHEA:10220"/>
        <dbReference type="Rhea" id="RHEA-COMP:9706"/>
        <dbReference type="Rhea" id="RHEA-COMP:9707"/>
        <dbReference type="ChEBI" id="CHEBI:15378"/>
        <dbReference type="ChEBI" id="CHEBI:30616"/>
        <dbReference type="ChEBI" id="CHEBI:33019"/>
        <dbReference type="ChEBI" id="CHEBI:58315"/>
        <dbReference type="ChEBI" id="CHEBI:78442"/>
        <dbReference type="ChEBI" id="CHEBI:78536"/>
        <dbReference type="ChEBI" id="CHEBI:456215"/>
        <dbReference type="EC" id="6.1.1.1"/>
    </reaction>
</comment>
<comment type="subunit">
    <text evidence="1">Homodimer.</text>
</comment>
<comment type="subcellular location">
    <subcellularLocation>
        <location evidence="1">Cytoplasm</location>
    </subcellularLocation>
</comment>
<comment type="similarity">
    <text evidence="1">Belongs to the class-I aminoacyl-tRNA synthetase family. TyrS type 1 subfamily.</text>
</comment>
<gene>
    <name evidence="1" type="primary">tyrS</name>
    <name type="ordered locus">PEPE_0235</name>
</gene>
<dbReference type="EC" id="6.1.1.1" evidence="1"/>
<dbReference type="EMBL" id="CP000422">
    <property type="protein sequence ID" value="ABJ67336.1"/>
    <property type="molecule type" value="Genomic_DNA"/>
</dbReference>
<dbReference type="RefSeq" id="WP_011672947.1">
    <property type="nucleotide sequence ID" value="NC_008525.1"/>
</dbReference>
<dbReference type="SMR" id="Q03HI6"/>
<dbReference type="STRING" id="278197.PEPE_0235"/>
<dbReference type="GeneID" id="33062010"/>
<dbReference type="KEGG" id="ppe:PEPE_0235"/>
<dbReference type="eggNOG" id="COG0162">
    <property type="taxonomic scope" value="Bacteria"/>
</dbReference>
<dbReference type="HOGENOM" id="CLU_024003_0_3_9"/>
<dbReference type="OrthoDB" id="9804243at2"/>
<dbReference type="Proteomes" id="UP000000773">
    <property type="component" value="Chromosome"/>
</dbReference>
<dbReference type="GO" id="GO:0005829">
    <property type="term" value="C:cytosol"/>
    <property type="evidence" value="ECO:0007669"/>
    <property type="project" value="TreeGrafter"/>
</dbReference>
<dbReference type="GO" id="GO:0005524">
    <property type="term" value="F:ATP binding"/>
    <property type="evidence" value="ECO:0007669"/>
    <property type="project" value="UniProtKB-UniRule"/>
</dbReference>
<dbReference type="GO" id="GO:0003723">
    <property type="term" value="F:RNA binding"/>
    <property type="evidence" value="ECO:0007669"/>
    <property type="project" value="UniProtKB-KW"/>
</dbReference>
<dbReference type="GO" id="GO:0004831">
    <property type="term" value="F:tyrosine-tRNA ligase activity"/>
    <property type="evidence" value="ECO:0007669"/>
    <property type="project" value="UniProtKB-UniRule"/>
</dbReference>
<dbReference type="GO" id="GO:0006437">
    <property type="term" value="P:tyrosyl-tRNA aminoacylation"/>
    <property type="evidence" value="ECO:0007669"/>
    <property type="project" value="UniProtKB-UniRule"/>
</dbReference>
<dbReference type="CDD" id="cd00165">
    <property type="entry name" value="S4"/>
    <property type="match status" value="1"/>
</dbReference>
<dbReference type="CDD" id="cd00805">
    <property type="entry name" value="TyrRS_core"/>
    <property type="match status" value="1"/>
</dbReference>
<dbReference type="FunFam" id="1.10.240.10:FF:000001">
    <property type="entry name" value="Tyrosine--tRNA ligase"/>
    <property type="match status" value="1"/>
</dbReference>
<dbReference type="FunFam" id="3.40.50.620:FF:000008">
    <property type="entry name" value="Tyrosine--tRNA ligase"/>
    <property type="match status" value="1"/>
</dbReference>
<dbReference type="Gene3D" id="3.40.50.620">
    <property type="entry name" value="HUPs"/>
    <property type="match status" value="1"/>
</dbReference>
<dbReference type="Gene3D" id="3.10.290.10">
    <property type="entry name" value="RNA-binding S4 domain"/>
    <property type="match status" value="1"/>
</dbReference>
<dbReference type="Gene3D" id="1.10.240.10">
    <property type="entry name" value="Tyrosyl-Transfer RNA Synthetase"/>
    <property type="match status" value="1"/>
</dbReference>
<dbReference type="HAMAP" id="MF_02006">
    <property type="entry name" value="Tyr_tRNA_synth_type1"/>
    <property type="match status" value="1"/>
</dbReference>
<dbReference type="InterPro" id="IPR001412">
    <property type="entry name" value="aa-tRNA-synth_I_CS"/>
</dbReference>
<dbReference type="InterPro" id="IPR002305">
    <property type="entry name" value="aa-tRNA-synth_Ic"/>
</dbReference>
<dbReference type="InterPro" id="IPR014729">
    <property type="entry name" value="Rossmann-like_a/b/a_fold"/>
</dbReference>
<dbReference type="InterPro" id="IPR002942">
    <property type="entry name" value="S4_RNA-bd"/>
</dbReference>
<dbReference type="InterPro" id="IPR036986">
    <property type="entry name" value="S4_RNA-bd_sf"/>
</dbReference>
<dbReference type="InterPro" id="IPR054608">
    <property type="entry name" value="SYY-like_C"/>
</dbReference>
<dbReference type="InterPro" id="IPR002307">
    <property type="entry name" value="Tyr-tRNA-ligase"/>
</dbReference>
<dbReference type="InterPro" id="IPR024088">
    <property type="entry name" value="Tyr-tRNA-ligase_bac-type"/>
</dbReference>
<dbReference type="InterPro" id="IPR024107">
    <property type="entry name" value="Tyr-tRNA-ligase_bac_1"/>
</dbReference>
<dbReference type="NCBIfam" id="TIGR00234">
    <property type="entry name" value="tyrS"/>
    <property type="match status" value="1"/>
</dbReference>
<dbReference type="PANTHER" id="PTHR11766:SF0">
    <property type="entry name" value="TYROSINE--TRNA LIGASE, MITOCHONDRIAL"/>
    <property type="match status" value="1"/>
</dbReference>
<dbReference type="PANTHER" id="PTHR11766">
    <property type="entry name" value="TYROSYL-TRNA SYNTHETASE"/>
    <property type="match status" value="1"/>
</dbReference>
<dbReference type="Pfam" id="PF22421">
    <property type="entry name" value="SYY_C-terminal"/>
    <property type="match status" value="1"/>
</dbReference>
<dbReference type="Pfam" id="PF00579">
    <property type="entry name" value="tRNA-synt_1b"/>
    <property type="match status" value="1"/>
</dbReference>
<dbReference type="PRINTS" id="PR01040">
    <property type="entry name" value="TRNASYNTHTYR"/>
</dbReference>
<dbReference type="SMART" id="SM00363">
    <property type="entry name" value="S4"/>
    <property type="match status" value="1"/>
</dbReference>
<dbReference type="SUPFAM" id="SSF55174">
    <property type="entry name" value="Alpha-L RNA-binding motif"/>
    <property type="match status" value="1"/>
</dbReference>
<dbReference type="SUPFAM" id="SSF52374">
    <property type="entry name" value="Nucleotidylyl transferase"/>
    <property type="match status" value="1"/>
</dbReference>
<dbReference type="PROSITE" id="PS00178">
    <property type="entry name" value="AA_TRNA_LIGASE_I"/>
    <property type="match status" value="1"/>
</dbReference>
<dbReference type="PROSITE" id="PS50889">
    <property type="entry name" value="S4"/>
    <property type="match status" value="1"/>
</dbReference>
<accession>Q03HI6</accession>
<reference key="1">
    <citation type="journal article" date="2006" name="Proc. Natl. Acad. Sci. U.S.A.">
        <title>Comparative genomics of the lactic acid bacteria.</title>
        <authorList>
            <person name="Makarova K.S."/>
            <person name="Slesarev A."/>
            <person name="Wolf Y.I."/>
            <person name="Sorokin A."/>
            <person name="Mirkin B."/>
            <person name="Koonin E.V."/>
            <person name="Pavlov A."/>
            <person name="Pavlova N."/>
            <person name="Karamychev V."/>
            <person name="Polouchine N."/>
            <person name="Shakhova V."/>
            <person name="Grigoriev I."/>
            <person name="Lou Y."/>
            <person name="Rohksar D."/>
            <person name="Lucas S."/>
            <person name="Huang K."/>
            <person name="Goodstein D.M."/>
            <person name="Hawkins T."/>
            <person name="Plengvidhya V."/>
            <person name="Welker D."/>
            <person name="Hughes J."/>
            <person name="Goh Y."/>
            <person name="Benson A."/>
            <person name="Baldwin K."/>
            <person name="Lee J.-H."/>
            <person name="Diaz-Muniz I."/>
            <person name="Dosti B."/>
            <person name="Smeianov V."/>
            <person name="Wechter W."/>
            <person name="Barabote R."/>
            <person name="Lorca G."/>
            <person name="Altermann E."/>
            <person name="Barrangou R."/>
            <person name="Ganesan B."/>
            <person name="Xie Y."/>
            <person name="Rawsthorne H."/>
            <person name="Tamir D."/>
            <person name="Parker C."/>
            <person name="Breidt F."/>
            <person name="Broadbent J.R."/>
            <person name="Hutkins R."/>
            <person name="O'Sullivan D."/>
            <person name="Steele J."/>
            <person name="Unlu G."/>
            <person name="Saier M.H. Jr."/>
            <person name="Klaenhammer T."/>
            <person name="Richardson P."/>
            <person name="Kozyavkin S."/>
            <person name="Weimer B.C."/>
            <person name="Mills D.A."/>
        </authorList>
    </citation>
    <scope>NUCLEOTIDE SEQUENCE [LARGE SCALE GENOMIC DNA]</scope>
    <source>
        <strain>ATCC 25745 / CCUG 21536 / LMG 10740 / 183-1w</strain>
    </source>
</reference>
<evidence type="ECO:0000255" key="1">
    <source>
        <dbReference type="HAMAP-Rule" id="MF_02006"/>
    </source>
</evidence>
<proteinExistence type="inferred from homology"/>
<organism>
    <name type="scientific">Pediococcus pentosaceus (strain ATCC 25745 / CCUG 21536 / LMG 10740 / 183-1w)</name>
    <dbReference type="NCBI Taxonomy" id="278197"/>
    <lineage>
        <taxon>Bacteria</taxon>
        <taxon>Bacillati</taxon>
        <taxon>Bacillota</taxon>
        <taxon>Bacilli</taxon>
        <taxon>Lactobacillales</taxon>
        <taxon>Lactobacillaceae</taxon>
        <taxon>Pediococcus</taxon>
    </lineage>
</organism>
<name>SYY_PEDPA</name>
<feature type="chain" id="PRO_1000189315" description="Tyrosine--tRNA ligase">
    <location>
        <begin position="1"/>
        <end position="417"/>
    </location>
</feature>
<feature type="domain" description="S4 RNA-binding" evidence="1">
    <location>
        <begin position="349"/>
        <end position="417"/>
    </location>
</feature>
<feature type="short sequence motif" description="'HIGH' region">
    <location>
        <begin position="39"/>
        <end position="48"/>
    </location>
</feature>
<feature type="short sequence motif" description="'KMSKS' region">
    <location>
        <begin position="227"/>
        <end position="231"/>
    </location>
</feature>
<feature type="binding site" evidence="1">
    <location>
        <position position="34"/>
    </location>
    <ligand>
        <name>L-tyrosine</name>
        <dbReference type="ChEBI" id="CHEBI:58315"/>
    </ligand>
</feature>
<feature type="binding site" evidence="1">
    <location>
        <position position="165"/>
    </location>
    <ligand>
        <name>L-tyrosine</name>
        <dbReference type="ChEBI" id="CHEBI:58315"/>
    </ligand>
</feature>
<feature type="binding site" evidence="1">
    <location>
        <position position="169"/>
    </location>
    <ligand>
        <name>L-tyrosine</name>
        <dbReference type="ChEBI" id="CHEBI:58315"/>
    </ligand>
</feature>
<feature type="binding site" evidence="1">
    <location>
        <position position="230"/>
    </location>
    <ligand>
        <name>ATP</name>
        <dbReference type="ChEBI" id="CHEBI:30616"/>
    </ligand>
</feature>
<sequence>MNIIDELTWRGAVNQQTDEEGLKKLTDEKKIGLYAGIDPTGDSMHIGHLIPFMVLKRFQQAGHKPVILIGGGTGSIGDPSGKKSERVLQTMEQVHHNEEALKSQMVKFFGTDNFRMVNNYDWLSKMSLLDFLRDYGKLFNVNTMLAKDIVASRLEVGISFTEFTYQILQSIDFLHLYKNEDVQLQIGGGDQWGNITAGTDLIHRMEGQEAKVYGLTIPLLLKADGTKFGKSEGGNVWLDAEKTTPYEFYQFWLNQDDRDVVKFLKYFTFLSHEEIERLAETVKTAPEKREAQRRLAEEVTSFVHGDAAVEEAQHISAALFSGEVKDLTASEIEQGFKNMPSVDVENKKENIVLWLVDTTKIESSRRQAREDIQNGAIRINGEKVTDVNAEIDPASNFDGKFVIVRRGKKKYFLARVK</sequence>
<keyword id="KW-0030">Aminoacyl-tRNA synthetase</keyword>
<keyword id="KW-0067">ATP-binding</keyword>
<keyword id="KW-0963">Cytoplasm</keyword>
<keyword id="KW-0436">Ligase</keyword>
<keyword id="KW-0547">Nucleotide-binding</keyword>
<keyword id="KW-0648">Protein biosynthesis</keyword>
<keyword id="KW-0694">RNA-binding</keyword>